<sequence>MRCSDLLLLFLLALCVLPGISCRNQEEKLLQDLMTNYNRHLRPALRGDQVIDVTLKLTLTNLISLNEREETLTTNVWIEMQWSDYRLRWDPDKYDDIQQLRVPSAMVWLPDIVLENNIDGTFEITLYTNVLVYPDGSIYWLPPAIYRSSCSIHVTYFPFDWQNCTMVFQSQTYSANEINLLLTVEEGQTIEWIFIDPEAFTENGEWAIKHRPARKIINSGRFTPDDIQYQQVIFYLIIQRKPLFYIINIIVPCVLISSMAVLVYFLPAKAGGQKCTVSINVLLAQTVFLFLIAQKVPETSQAVPLIGKYLTFLMVVTVVIVVNAVIVLNVSLRTPNTHSMSQRVRQVWLHLLPRYLGMHMPEEAPGPPQATRRRSSLGLMVKADEYMLWKARTELLFEKQKERDGLMKTVLEKIGRGLESNCAQDFCQSLEEASPEIRACVEACNHIANATREQNDFSSENEEWILVGRVIDRVCFFIMASLFVCGTIGIFLMAHFNQAPALPFPGDPKTYLPP</sequence>
<gene>
    <name type="primary">CHRNG</name>
</gene>
<keyword id="KW-1003">Cell membrane</keyword>
<keyword id="KW-1015">Disulfide bond</keyword>
<keyword id="KW-0325">Glycoprotein</keyword>
<keyword id="KW-0407">Ion channel</keyword>
<keyword id="KW-0406">Ion transport</keyword>
<keyword id="KW-1071">Ligand-gated ion channel</keyword>
<keyword id="KW-0472">Membrane</keyword>
<keyword id="KW-0597">Phosphoprotein</keyword>
<keyword id="KW-0628">Postsynaptic cell membrane</keyword>
<keyword id="KW-0675">Receptor</keyword>
<keyword id="KW-1185">Reference proteome</keyword>
<keyword id="KW-0732">Signal</keyword>
<keyword id="KW-0770">Synapse</keyword>
<keyword id="KW-0812">Transmembrane</keyword>
<keyword id="KW-1133">Transmembrane helix</keyword>
<keyword id="KW-0813">Transport</keyword>
<protein>
    <recommendedName>
        <fullName>Acetylcholine receptor subunit gamma</fullName>
    </recommendedName>
</protein>
<feature type="signal peptide">
    <location>
        <begin position="1"/>
        <end position="22"/>
    </location>
</feature>
<feature type="chain" id="PRO_0000000337" description="Acetylcholine receptor subunit gamma">
    <location>
        <begin position="23"/>
        <end position="514"/>
    </location>
</feature>
<feature type="topological domain" description="Extracellular">
    <location>
        <begin position="23"/>
        <end position="241"/>
    </location>
</feature>
<feature type="transmembrane region" description="Helical">
    <location>
        <begin position="242"/>
        <end position="266"/>
    </location>
</feature>
<feature type="transmembrane region" description="Helical">
    <location>
        <begin position="275"/>
        <end position="293"/>
    </location>
</feature>
<feature type="transmembrane region" description="Helical">
    <location>
        <begin position="309"/>
        <end position="330"/>
    </location>
</feature>
<feature type="topological domain" description="Cytoplasmic">
    <location>
        <begin position="331"/>
        <end position="473"/>
    </location>
</feature>
<feature type="transmembrane region" description="Helical">
    <location>
        <begin position="474"/>
        <end position="494"/>
    </location>
</feature>
<feature type="modified residue" description="Phosphotyrosine; by Tyr-kinases" evidence="1">
    <location>
        <position position="386"/>
    </location>
</feature>
<feature type="glycosylation site" description="N-linked (GlcNAc...) asparagine" evidence="3">
    <location>
        <position position="163"/>
    </location>
</feature>
<feature type="disulfide bond" evidence="1">
    <location>
        <begin position="150"/>
        <end position="164"/>
    </location>
</feature>
<name>ACHG_CHICK</name>
<proteinExistence type="inferred from homology"/>
<reference key="1">
    <citation type="journal article" date="1984" name="Proc. Natl. Acad. Sci. U.S.A.">
        <title>Structure linkage, and sequence of the two genes encoding the delta and gamma subunits of the nicotinic acetylcholine receptor.</title>
        <authorList>
            <person name="Nef P."/>
            <person name="Mauron A."/>
            <person name="Stalder R."/>
            <person name="Alliod C."/>
            <person name="Ballivet M."/>
        </authorList>
    </citation>
    <scope>NUCLEOTIDE SEQUENCE [GENOMIC DNA]</scope>
</reference>
<reference key="2">
    <citation type="submission" date="1985-10" db="EMBL/GenBank/DDBJ databases">
        <authorList>
            <person name="Ballivet M."/>
        </authorList>
    </citation>
    <scope>NUCLEOTIDE SEQUENCE [GENOMIC DNA]</scope>
</reference>
<reference key="3">
    <citation type="journal article" date="1992" name="Cell. Mol. Neurobiol.">
        <title>Analysis of binding and activating functions of the chick muscle acetylcholine receptor gamma-subunit upstream sequence.</title>
        <authorList>
            <person name="Jia H.-T."/>
            <person name="Tsay H.-J."/>
            <person name="Schmidt J."/>
        </authorList>
    </citation>
    <scope>NUCLEOTIDE SEQUENCE [GENOMIC DNA] OF 1-12</scope>
</reference>
<dbReference type="EMBL" id="K02904">
    <property type="protein sequence ID" value="AAB59945.1"/>
    <property type="molecule type" value="Genomic_DNA"/>
</dbReference>
<dbReference type="EMBL" id="S47175">
    <property type="protein sequence ID" value="AAD13851.1"/>
    <property type="molecule type" value="Genomic_DNA"/>
</dbReference>
<dbReference type="PIR" id="A03172">
    <property type="entry name" value="ACCHG1"/>
</dbReference>
<dbReference type="SMR" id="P02713"/>
<dbReference type="ComplexPortal" id="CPX-254">
    <property type="entry name" value="Muscle-type nicotinic acetylcholine receptor complex, alpha1-beta1-delta-gamma"/>
</dbReference>
<dbReference type="FunCoup" id="P02713">
    <property type="interactions" value="27"/>
</dbReference>
<dbReference type="STRING" id="9031.ENSGALP00000012818"/>
<dbReference type="GlyCosmos" id="P02713">
    <property type="glycosylation" value="1 site, No reported glycans"/>
</dbReference>
<dbReference type="GlyGen" id="P02713">
    <property type="glycosylation" value="1 site"/>
</dbReference>
<dbReference type="PaxDb" id="9031-ENSGALP00000012818"/>
<dbReference type="VEuPathDB" id="HostDB:geneid_429151"/>
<dbReference type="eggNOG" id="KOG3645">
    <property type="taxonomic scope" value="Eukaryota"/>
</dbReference>
<dbReference type="InParanoid" id="P02713"/>
<dbReference type="OrthoDB" id="5975154at2759"/>
<dbReference type="PhylomeDB" id="P02713"/>
<dbReference type="Proteomes" id="UP000000539">
    <property type="component" value="Unassembled WGS sequence"/>
</dbReference>
<dbReference type="GO" id="GO:0005892">
    <property type="term" value="C:acetylcholine-gated channel complex"/>
    <property type="evidence" value="ECO:0000318"/>
    <property type="project" value="GO_Central"/>
</dbReference>
<dbReference type="GO" id="GO:0043005">
    <property type="term" value="C:neuron projection"/>
    <property type="evidence" value="ECO:0000318"/>
    <property type="project" value="GO_Central"/>
</dbReference>
<dbReference type="GO" id="GO:0005886">
    <property type="term" value="C:plasma membrane"/>
    <property type="evidence" value="ECO:0000318"/>
    <property type="project" value="GO_Central"/>
</dbReference>
<dbReference type="GO" id="GO:0045211">
    <property type="term" value="C:postsynaptic membrane"/>
    <property type="evidence" value="ECO:0007669"/>
    <property type="project" value="UniProtKB-SubCell"/>
</dbReference>
<dbReference type="GO" id="GO:0045202">
    <property type="term" value="C:synapse"/>
    <property type="evidence" value="ECO:0000318"/>
    <property type="project" value="GO_Central"/>
</dbReference>
<dbReference type="GO" id="GO:0015464">
    <property type="term" value="F:acetylcholine receptor activity"/>
    <property type="evidence" value="ECO:0000318"/>
    <property type="project" value="GO_Central"/>
</dbReference>
<dbReference type="GO" id="GO:0022848">
    <property type="term" value="F:acetylcholine-gated monoatomic cation-selective channel activity"/>
    <property type="evidence" value="ECO:0000318"/>
    <property type="project" value="GO_Central"/>
</dbReference>
<dbReference type="GO" id="GO:1904315">
    <property type="term" value="F:transmitter-gated monoatomic ion channel activity involved in regulation of postsynaptic membrane potential"/>
    <property type="evidence" value="ECO:0000250"/>
    <property type="project" value="UniProtKB"/>
</dbReference>
<dbReference type="GO" id="GO:0095500">
    <property type="term" value="P:acetylcholine receptor signaling pathway"/>
    <property type="evidence" value="ECO:0000318"/>
    <property type="project" value="GO_Central"/>
</dbReference>
<dbReference type="GO" id="GO:0007268">
    <property type="term" value="P:chemical synaptic transmission"/>
    <property type="evidence" value="ECO:0000318"/>
    <property type="project" value="GO_Central"/>
</dbReference>
<dbReference type="GO" id="GO:0051899">
    <property type="term" value="P:membrane depolarization"/>
    <property type="evidence" value="ECO:0000318"/>
    <property type="project" value="GO_Central"/>
</dbReference>
<dbReference type="GO" id="GO:0034220">
    <property type="term" value="P:monoatomic ion transmembrane transport"/>
    <property type="evidence" value="ECO:0000318"/>
    <property type="project" value="GO_Central"/>
</dbReference>
<dbReference type="CDD" id="cd19029">
    <property type="entry name" value="LGIC_ECD_nAChR_G"/>
    <property type="match status" value="1"/>
</dbReference>
<dbReference type="CDD" id="cd19064">
    <property type="entry name" value="LGIC_TM_nAChR"/>
    <property type="match status" value="1"/>
</dbReference>
<dbReference type="FunFam" id="1.20.58.390:FF:000010">
    <property type="entry name" value="Nicotinic acetylcholine receptor subunit epsilon"/>
    <property type="match status" value="1"/>
</dbReference>
<dbReference type="FunFam" id="1.20.58.390:FF:000036">
    <property type="entry name" value="Nicotinic acetylcholine receptor subunit gamma"/>
    <property type="match status" value="1"/>
</dbReference>
<dbReference type="FunFam" id="2.70.170.10:FF:000012">
    <property type="entry name" value="Nicotinic acetylcholine receptor subunit gamma"/>
    <property type="match status" value="1"/>
</dbReference>
<dbReference type="Gene3D" id="2.70.170.10">
    <property type="entry name" value="Neurotransmitter-gated ion-channel ligand-binding domain"/>
    <property type="match status" value="1"/>
</dbReference>
<dbReference type="Gene3D" id="1.20.58.390">
    <property type="entry name" value="Neurotransmitter-gated ion-channel transmembrane domain"/>
    <property type="match status" value="2"/>
</dbReference>
<dbReference type="InterPro" id="IPR006202">
    <property type="entry name" value="Neur_chan_lig-bd"/>
</dbReference>
<dbReference type="InterPro" id="IPR036734">
    <property type="entry name" value="Neur_chan_lig-bd_sf"/>
</dbReference>
<dbReference type="InterPro" id="IPR006201">
    <property type="entry name" value="Neur_channel"/>
</dbReference>
<dbReference type="InterPro" id="IPR036719">
    <property type="entry name" value="Neuro-gated_channel_TM_sf"/>
</dbReference>
<dbReference type="InterPro" id="IPR038050">
    <property type="entry name" value="Neuro_actylchol_rec"/>
</dbReference>
<dbReference type="InterPro" id="IPR006029">
    <property type="entry name" value="Neurotrans-gated_channel_TM"/>
</dbReference>
<dbReference type="InterPro" id="IPR018000">
    <property type="entry name" value="Neurotransmitter_ion_chnl_CS"/>
</dbReference>
<dbReference type="InterPro" id="IPR002394">
    <property type="entry name" value="Nicotinic_acetylcholine_rcpt"/>
</dbReference>
<dbReference type="NCBIfam" id="TIGR00860">
    <property type="entry name" value="LIC"/>
    <property type="match status" value="1"/>
</dbReference>
<dbReference type="PANTHER" id="PTHR18945">
    <property type="entry name" value="NEUROTRANSMITTER GATED ION CHANNEL"/>
    <property type="match status" value="1"/>
</dbReference>
<dbReference type="Pfam" id="PF02931">
    <property type="entry name" value="Neur_chan_LBD"/>
    <property type="match status" value="1"/>
</dbReference>
<dbReference type="Pfam" id="PF02932">
    <property type="entry name" value="Neur_chan_memb"/>
    <property type="match status" value="1"/>
</dbReference>
<dbReference type="PRINTS" id="PR00254">
    <property type="entry name" value="NICOTINICR"/>
</dbReference>
<dbReference type="PRINTS" id="PR00252">
    <property type="entry name" value="NRIONCHANNEL"/>
</dbReference>
<dbReference type="SUPFAM" id="SSF90112">
    <property type="entry name" value="Neurotransmitter-gated ion-channel transmembrane pore"/>
    <property type="match status" value="1"/>
</dbReference>
<dbReference type="SUPFAM" id="SSF63712">
    <property type="entry name" value="Nicotinic receptor ligand binding domain-like"/>
    <property type="match status" value="1"/>
</dbReference>
<dbReference type="PROSITE" id="PS00236">
    <property type="entry name" value="NEUROTR_ION_CHANNEL"/>
    <property type="match status" value="1"/>
</dbReference>
<organism>
    <name type="scientific">Gallus gallus</name>
    <name type="common">Chicken</name>
    <dbReference type="NCBI Taxonomy" id="9031"/>
    <lineage>
        <taxon>Eukaryota</taxon>
        <taxon>Metazoa</taxon>
        <taxon>Chordata</taxon>
        <taxon>Craniata</taxon>
        <taxon>Vertebrata</taxon>
        <taxon>Euteleostomi</taxon>
        <taxon>Archelosauria</taxon>
        <taxon>Archosauria</taxon>
        <taxon>Dinosauria</taxon>
        <taxon>Saurischia</taxon>
        <taxon>Theropoda</taxon>
        <taxon>Coelurosauria</taxon>
        <taxon>Aves</taxon>
        <taxon>Neognathae</taxon>
        <taxon>Galloanserae</taxon>
        <taxon>Galliformes</taxon>
        <taxon>Phasianidae</taxon>
        <taxon>Phasianinae</taxon>
        <taxon>Gallus</taxon>
    </lineage>
</organism>
<evidence type="ECO:0000250" key="1"/>
<evidence type="ECO:0000250" key="2">
    <source>
        <dbReference type="UniProtKB" id="P13536"/>
    </source>
</evidence>
<evidence type="ECO:0000255" key="3"/>
<evidence type="ECO:0000305" key="4"/>
<accession>P02713</accession>
<comment type="function">
    <text>After binding acetylcholine, the AChR responds by an extensive change in conformation that affects all subunits and leads to opening of an ion-conducting channel across the plasma membrane.</text>
</comment>
<comment type="catalytic activity">
    <reaction evidence="2">
        <text>K(+)(in) = K(+)(out)</text>
        <dbReference type="Rhea" id="RHEA:29463"/>
        <dbReference type="ChEBI" id="CHEBI:29103"/>
    </reaction>
</comment>
<comment type="catalytic activity">
    <reaction evidence="2">
        <text>Na(+)(in) = Na(+)(out)</text>
        <dbReference type="Rhea" id="RHEA:34963"/>
        <dbReference type="ChEBI" id="CHEBI:29101"/>
    </reaction>
</comment>
<comment type="subunit">
    <text>Pentamer of two alpha chains, and one each of the beta, delta, and gamma chains.</text>
</comment>
<comment type="subcellular location">
    <subcellularLocation>
        <location>Postsynaptic cell membrane</location>
        <topology>Multi-pass membrane protein</topology>
    </subcellularLocation>
    <subcellularLocation>
        <location>Cell membrane</location>
        <topology>Multi-pass membrane protein</topology>
    </subcellularLocation>
</comment>
<comment type="similarity">
    <text evidence="4">Belongs to the ligand-gated ion channel (TC 1.A.9) family. Acetylcholine receptor (TC 1.A.9.1) subfamily. Gamma/CHRNG sub-subfamily.</text>
</comment>